<accession>B0SH16</accession>
<comment type="function">
    <text evidence="1">Required for maturation of 30S ribosomal subunits.</text>
</comment>
<comment type="subcellular location">
    <subcellularLocation>
        <location evidence="1">Cytoplasm</location>
    </subcellularLocation>
</comment>
<comment type="similarity">
    <text evidence="1">Belongs to the RimP family.</text>
</comment>
<evidence type="ECO:0000255" key="1">
    <source>
        <dbReference type="HAMAP-Rule" id="MF_01077"/>
    </source>
</evidence>
<reference key="1">
    <citation type="journal article" date="2008" name="PLoS ONE">
        <title>Genome sequence of the saprophyte Leptospira biflexa provides insights into the evolution of Leptospira and the pathogenesis of leptospirosis.</title>
        <authorList>
            <person name="Picardeau M."/>
            <person name="Bulach D.M."/>
            <person name="Bouchier C."/>
            <person name="Zuerner R.L."/>
            <person name="Zidane N."/>
            <person name="Wilson P.J."/>
            <person name="Creno S."/>
            <person name="Kuczek E.S."/>
            <person name="Bommezzadri S."/>
            <person name="Davis J.C."/>
            <person name="McGrath A."/>
            <person name="Johnson M.J."/>
            <person name="Boursaux-Eude C."/>
            <person name="Seemann T."/>
            <person name="Rouy Z."/>
            <person name="Coppel R.L."/>
            <person name="Rood J.I."/>
            <person name="Lajus A."/>
            <person name="Davies J.K."/>
            <person name="Medigue C."/>
            <person name="Adler B."/>
        </authorList>
    </citation>
    <scope>NUCLEOTIDE SEQUENCE [LARGE SCALE GENOMIC DNA]</scope>
    <source>
        <strain>Patoc 1 / Ames</strain>
    </source>
</reference>
<proteinExistence type="inferred from homology"/>
<sequence>MVYTEENIRELILRVLAPPLALFSLQVQNRKNHALIEIELDHLTDKTGSASLEDCETVSRRLKEELDQWGEEFDFTLQVSSAGAERVLRLPEDLIRFQGLLVKLEVPLESGKWDKRLYRLGPVSGDSVELTLYDRKTRHKKNQKSVSMPIAEIRKGNLYLEI</sequence>
<name>RIMP_LEPBA</name>
<protein>
    <recommendedName>
        <fullName evidence="1">Ribosome maturation factor RimP</fullName>
    </recommendedName>
</protein>
<feature type="chain" id="PRO_1000136774" description="Ribosome maturation factor RimP">
    <location>
        <begin position="1"/>
        <end position="162"/>
    </location>
</feature>
<dbReference type="EMBL" id="CP000777">
    <property type="protein sequence ID" value="ABZ93983.1"/>
    <property type="molecule type" value="Genomic_DNA"/>
</dbReference>
<dbReference type="RefSeq" id="WP_012388509.1">
    <property type="nucleotide sequence ID" value="NC_010842.1"/>
</dbReference>
<dbReference type="SMR" id="B0SH16"/>
<dbReference type="KEGG" id="lbf:LBF_1470"/>
<dbReference type="HOGENOM" id="CLU_132594_0_0_12"/>
<dbReference type="GO" id="GO:0005829">
    <property type="term" value="C:cytosol"/>
    <property type="evidence" value="ECO:0007669"/>
    <property type="project" value="TreeGrafter"/>
</dbReference>
<dbReference type="GO" id="GO:0000028">
    <property type="term" value="P:ribosomal small subunit assembly"/>
    <property type="evidence" value="ECO:0007669"/>
    <property type="project" value="TreeGrafter"/>
</dbReference>
<dbReference type="GO" id="GO:0006412">
    <property type="term" value="P:translation"/>
    <property type="evidence" value="ECO:0007669"/>
    <property type="project" value="TreeGrafter"/>
</dbReference>
<dbReference type="Gene3D" id="3.30.300.70">
    <property type="entry name" value="RimP-like superfamily, N-terminal"/>
    <property type="match status" value="1"/>
</dbReference>
<dbReference type="HAMAP" id="MF_01077">
    <property type="entry name" value="RimP"/>
    <property type="match status" value="1"/>
</dbReference>
<dbReference type="InterPro" id="IPR003728">
    <property type="entry name" value="Ribosome_maturation_RimP"/>
</dbReference>
<dbReference type="InterPro" id="IPR028989">
    <property type="entry name" value="RimP_N"/>
</dbReference>
<dbReference type="InterPro" id="IPR035956">
    <property type="entry name" value="RimP_N_sf"/>
</dbReference>
<dbReference type="NCBIfam" id="NF011228">
    <property type="entry name" value="PRK14635.1"/>
    <property type="match status" value="1"/>
</dbReference>
<dbReference type="PANTHER" id="PTHR33867">
    <property type="entry name" value="RIBOSOME MATURATION FACTOR RIMP"/>
    <property type="match status" value="1"/>
</dbReference>
<dbReference type="PANTHER" id="PTHR33867:SF1">
    <property type="entry name" value="RIBOSOME MATURATION FACTOR RIMP"/>
    <property type="match status" value="1"/>
</dbReference>
<dbReference type="Pfam" id="PF02576">
    <property type="entry name" value="RimP_N"/>
    <property type="match status" value="1"/>
</dbReference>
<dbReference type="SUPFAM" id="SSF75420">
    <property type="entry name" value="YhbC-like, N-terminal domain"/>
    <property type="match status" value="1"/>
</dbReference>
<keyword id="KW-0963">Cytoplasm</keyword>
<keyword id="KW-0690">Ribosome biogenesis</keyword>
<gene>
    <name evidence="1" type="primary">rimP</name>
    <name type="ordered locus">LBF_1470</name>
</gene>
<organism>
    <name type="scientific">Leptospira biflexa serovar Patoc (strain Patoc 1 / Ames)</name>
    <dbReference type="NCBI Taxonomy" id="355278"/>
    <lineage>
        <taxon>Bacteria</taxon>
        <taxon>Pseudomonadati</taxon>
        <taxon>Spirochaetota</taxon>
        <taxon>Spirochaetia</taxon>
        <taxon>Leptospirales</taxon>
        <taxon>Leptospiraceae</taxon>
        <taxon>Leptospira</taxon>
    </lineage>
</organism>